<dbReference type="EC" id="4.1.2.25" evidence="2"/>
<dbReference type="EC" id="5.1.99.8" evidence="2"/>
<dbReference type="EMBL" id="L12966">
    <property type="status" value="NOT_ANNOTATED_CDS"/>
    <property type="molecule type" value="Genomic_DNA"/>
</dbReference>
<dbReference type="EMBL" id="U28379">
    <property type="protein sequence ID" value="AAA89138.1"/>
    <property type="status" value="ALT_INIT"/>
    <property type="molecule type" value="Genomic_DNA"/>
</dbReference>
<dbReference type="EMBL" id="U00096">
    <property type="protein sequence ID" value="AAC76094.2"/>
    <property type="molecule type" value="Genomic_DNA"/>
</dbReference>
<dbReference type="EMBL" id="AP009048">
    <property type="protein sequence ID" value="BAE77109.1"/>
    <property type="molecule type" value="Genomic_DNA"/>
</dbReference>
<dbReference type="PIR" id="H65093">
    <property type="entry name" value="H65093"/>
</dbReference>
<dbReference type="RefSeq" id="NP_417530.2">
    <property type="nucleotide sequence ID" value="NC_000913.3"/>
</dbReference>
<dbReference type="RefSeq" id="WP_001295541.1">
    <property type="nucleotide sequence ID" value="NZ_STEB01000001.1"/>
</dbReference>
<dbReference type="PDB" id="2O90">
    <property type="method" value="X-ray"/>
    <property type="resolution" value="1.07 A"/>
    <property type="chains" value="A=1-122"/>
</dbReference>
<dbReference type="PDBsum" id="2O90"/>
<dbReference type="SMR" id="P0AC16"/>
<dbReference type="BioGRID" id="4259256">
    <property type="interactions" value="2"/>
</dbReference>
<dbReference type="DIP" id="DIP-36044N"/>
<dbReference type="FunCoup" id="P0AC16">
    <property type="interactions" value="493"/>
</dbReference>
<dbReference type="IntAct" id="P0AC16">
    <property type="interactions" value="2"/>
</dbReference>
<dbReference type="STRING" id="511145.b3058"/>
<dbReference type="PaxDb" id="511145-b3058"/>
<dbReference type="EnsemblBacteria" id="AAC76094">
    <property type="protein sequence ID" value="AAC76094"/>
    <property type="gene ID" value="b3058"/>
</dbReference>
<dbReference type="GeneID" id="75173180"/>
<dbReference type="GeneID" id="947544"/>
<dbReference type="KEGG" id="ecj:JW3030"/>
<dbReference type="KEGG" id="eco:b3058"/>
<dbReference type="KEGG" id="ecoc:C3026_16710"/>
<dbReference type="PATRIC" id="fig|1411691.4.peg.3673"/>
<dbReference type="EchoBASE" id="EB1624"/>
<dbReference type="eggNOG" id="COG1539">
    <property type="taxonomic scope" value="Bacteria"/>
</dbReference>
<dbReference type="HOGENOM" id="CLU_112632_0_2_6"/>
<dbReference type="InParanoid" id="P0AC16"/>
<dbReference type="OMA" id="VIGIYDW"/>
<dbReference type="OrthoDB" id="9810587at2"/>
<dbReference type="PhylomeDB" id="P0AC16"/>
<dbReference type="BioCyc" id="EcoCyc:H2NEOPTERINALDOL-MONOMER"/>
<dbReference type="BioCyc" id="MetaCyc:H2NEOPTERINALDOL-MONOMER"/>
<dbReference type="BRENDA" id="1.13.11.81">
    <property type="organism ID" value="2026"/>
</dbReference>
<dbReference type="BRENDA" id="4.1.2.25">
    <property type="organism ID" value="2026"/>
</dbReference>
<dbReference type="SABIO-RK" id="P0AC16"/>
<dbReference type="UniPathway" id="UPA00077">
    <property type="reaction ID" value="UER00154"/>
</dbReference>
<dbReference type="EvolutionaryTrace" id="P0AC16"/>
<dbReference type="PRO" id="PR:P0AC16"/>
<dbReference type="Proteomes" id="UP000000625">
    <property type="component" value="Chromosome"/>
</dbReference>
<dbReference type="GO" id="GO:0005737">
    <property type="term" value="C:cytoplasm"/>
    <property type="evidence" value="ECO:0000318"/>
    <property type="project" value="GO_Central"/>
</dbReference>
<dbReference type="GO" id="GO:0004150">
    <property type="term" value="F:dihydroneopterin aldolase activity"/>
    <property type="evidence" value="ECO:0000314"/>
    <property type="project" value="EcoCyc"/>
</dbReference>
<dbReference type="GO" id="GO:0042802">
    <property type="term" value="F:identical protein binding"/>
    <property type="evidence" value="ECO:0000314"/>
    <property type="project" value="EcoCyc"/>
</dbReference>
<dbReference type="GO" id="GO:0016853">
    <property type="term" value="F:isomerase activity"/>
    <property type="evidence" value="ECO:0007669"/>
    <property type="project" value="UniProtKB-KW"/>
</dbReference>
<dbReference type="GO" id="GO:0046656">
    <property type="term" value="P:folic acid biosynthetic process"/>
    <property type="evidence" value="ECO:0007669"/>
    <property type="project" value="UniProtKB-KW"/>
</dbReference>
<dbReference type="GO" id="GO:0046654">
    <property type="term" value="P:tetrahydrofolate biosynthetic process"/>
    <property type="evidence" value="ECO:0007669"/>
    <property type="project" value="UniProtKB-UniPathway"/>
</dbReference>
<dbReference type="CDD" id="cd00534">
    <property type="entry name" value="DHNA_DHNTPE"/>
    <property type="match status" value="1"/>
</dbReference>
<dbReference type="FunFam" id="3.30.1130.10:FF:000002">
    <property type="entry name" value="7,8-dihydroneopterin aldolase"/>
    <property type="match status" value="1"/>
</dbReference>
<dbReference type="Gene3D" id="3.30.1130.10">
    <property type="match status" value="1"/>
</dbReference>
<dbReference type="InterPro" id="IPR006156">
    <property type="entry name" value="Dihydroneopterin_aldolase"/>
</dbReference>
<dbReference type="InterPro" id="IPR006157">
    <property type="entry name" value="FolB_dom"/>
</dbReference>
<dbReference type="InterPro" id="IPR043133">
    <property type="entry name" value="GTP-CH-I_C/QueF"/>
</dbReference>
<dbReference type="NCBIfam" id="TIGR00525">
    <property type="entry name" value="folB"/>
    <property type="match status" value="1"/>
</dbReference>
<dbReference type="NCBIfam" id="TIGR00526">
    <property type="entry name" value="folB_dom"/>
    <property type="match status" value="1"/>
</dbReference>
<dbReference type="NCBIfam" id="NF008614">
    <property type="entry name" value="PRK11593.1"/>
    <property type="match status" value="1"/>
</dbReference>
<dbReference type="PANTHER" id="PTHR42844">
    <property type="entry name" value="DIHYDRONEOPTERIN ALDOLASE 1-RELATED"/>
    <property type="match status" value="1"/>
</dbReference>
<dbReference type="PANTHER" id="PTHR42844:SF1">
    <property type="entry name" value="DIHYDRONEOPTERIN ALDOLASE 1-RELATED"/>
    <property type="match status" value="1"/>
</dbReference>
<dbReference type="Pfam" id="PF02152">
    <property type="entry name" value="FolB"/>
    <property type="match status" value="1"/>
</dbReference>
<dbReference type="SMART" id="SM00905">
    <property type="entry name" value="FolB"/>
    <property type="match status" value="1"/>
</dbReference>
<dbReference type="SUPFAM" id="SSF55620">
    <property type="entry name" value="Tetrahydrobiopterin biosynthesis enzymes-like"/>
    <property type="match status" value="1"/>
</dbReference>
<organism>
    <name type="scientific">Escherichia coli (strain K12)</name>
    <dbReference type="NCBI Taxonomy" id="83333"/>
    <lineage>
        <taxon>Bacteria</taxon>
        <taxon>Pseudomonadati</taxon>
        <taxon>Pseudomonadota</taxon>
        <taxon>Gammaproteobacteria</taxon>
        <taxon>Enterobacterales</taxon>
        <taxon>Enterobacteriaceae</taxon>
        <taxon>Escherichia</taxon>
    </lineage>
</organism>
<protein>
    <recommendedName>
        <fullName evidence="4">Dihydroneopterin aldolase</fullName>
        <shortName evidence="3">DHNA</shortName>
        <ecNumber evidence="2">4.1.2.25</ecNumber>
    </recommendedName>
    <alternativeName>
        <fullName>7,8-dihydroneopterin 2'-epimerase</fullName>
    </alternativeName>
    <alternativeName>
        <fullName>7,8-dihydroneopterin aldolase</fullName>
    </alternativeName>
    <alternativeName>
        <fullName>7,8-dihydroneopterin epimerase</fullName>
        <ecNumber evidence="2">5.1.99.8</ecNumber>
    </alternativeName>
    <alternativeName>
        <fullName>Dihydroneopterin epimerase</fullName>
    </alternativeName>
</protein>
<comment type="function">
    <text evidence="2">Catalyzes the conversion of 7,8-dihydroneopterin to 6-hydroxymethyl-7,8-dihydropterin. Can use L-threo-dihydroneopterin and D-erythro-dihydroneopterin as substrates for the formation of 6-hydroxymethyldihydropterin, but it can also catalyze the epimerization of carbon 2' of dihydroneopterin to dihydromonapterin at appreciable velocity.</text>
</comment>
<comment type="catalytic activity">
    <reaction evidence="2">
        <text>7,8-dihydroneopterin = 6-hydroxymethyl-7,8-dihydropterin + glycolaldehyde</text>
        <dbReference type="Rhea" id="RHEA:10540"/>
        <dbReference type="ChEBI" id="CHEBI:17001"/>
        <dbReference type="ChEBI" id="CHEBI:17071"/>
        <dbReference type="ChEBI" id="CHEBI:44841"/>
        <dbReference type="EC" id="4.1.2.25"/>
    </reaction>
</comment>
<comment type="catalytic activity">
    <reaction evidence="2">
        <text>7,8-dihydroneopterin = 7,8-dihydromonapterin</text>
        <dbReference type="Rhea" id="RHEA:45328"/>
        <dbReference type="ChEBI" id="CHEBI:17001"/>
        <dbReference type="ChEBI" id="CHEBI:71175"/>
        <dbReference type="EC" id="5.1.99.8"/>
    </reaction>
</comment>
<comment type="biophysicochemical properties">
    <kinetics>
        <KM evidence="2">64 uM for 7,8-dihydroneopterin in aldolase reaction</KM>
        <KM evidence="2">45 uM for 7,8-dihydroneopterin in epimerase reaction</KM>
        <KM evidence="2">36 uM for 7,8-dihydromonapterin in aldolase reaction</KM>
        <KM evidence="2">57 uM for 7,8-dihydromonapterin in epimerase reaction</KM>
        <Vmax evidence="2">127.0 umol/h/mg enzyme toward 7,8-dihydroneopterin in aldolase reaction</Vmax>
        <Vmax evidence="2">20.3 umol/h/mg enzyme toward 7,8-dihydroneopterin in epimerase reaction</Vmax>
        <Vmax evidence="2">158.0 umol/h/mg enzyme toward 7,8-dihydromonapterin in aldolase reaction</Vmax>
        <Vmax evidence="2">15.6 umol/h/mg enzyme toward 7,8-dihydromonapterin in epimerase reaction</Vmax>
    </kinetics>
</comment>
<comment type="pathway">
    <text>Cofactor biosynthesis; tetrahydrofolate biosynthesis; 2-amino-4-hydroxy-6-hydroxymethyl-7,8-dihydropteridine diphosphate from 7,8-dihydroneopterin triphosphate: step 3/4.</text>
</comment>
<comment type="subunit">
    <text evidence="2">Homooctamer.</text>
</comment>
<comment type="similarity">
    <text evidence="5">Belongs to the DHNA family.</text>
</comment>
<comment type="sequence caution" evidence="5">
    <conflict type="erroneous initiation">
        <sequence resource="EMBL-CDS" id="AAA89138"/>
    </conflict>
    <text>Extended N-terminus.</text>
</comment>
<accession>P0AC16</accession>
<accession>P31055</accession>
<accession>P76659</accession>
<accession>Q2M9E7</accession>
<evidence type="ECO:0000250" key="1">
    <source>
        <dbReference type="UniProtKB" id="P56740"/>
    </source>
</evidence>
<evidence type="ECO:0000269" key="2">
    <source>
    </source>
</evidence>
<evidence type="ECO:0000303" key="3">
    <source>
    </source>
</evidence>
<evidence type="ECO:0000303" key="4">
    <source>
    </source>
</evidence>
<evidence type="ECO:0000305" key="5"/>
<evidence type="ECO:0000305" key="6">
    <source>
    </source>
</evidence>
<evidence type="ECO:0007744" key="7">
    <source>
        <dbReference type="PDB" id="2O90"/>
    </source>
</evidence>
<evidence type="ECO:0007829" key="8">
    <source>
        <dbReference type="PDB" id="2O90"/>
    </source>
</evidence>
<gene>
    <name evidence="4" type="primary">folB</name>
    <name type="synonym">ygiG</name>
    <name type="ordered locus">b3058</name>
    <name type="ordered locus">JW3030</name>
</gene>
<keyword id="KW-0002">3D-structure</keyword>
<keyword id="KW-0289">Folate biosynthesis</keyword>
<keyword id="KW-0413">Isomerase</keyword>
<keyword id="KW-0456">Lyase</keyword>
<keyword id="KW-1185">Reference proteome</keyword>
<feature type="chain" id="PRO_0000168269" description="Dihydroneopterin aldolase">
    <location>
        <begin position="1"/>
        <end position="122"/>
    </location>
</feature>
<feature type="active site" description="Proton donor/acceptor" evidence="1 6">
    <location>
        <position position="98"/>
    </location>
</feature>
<feature type="binding site" evidence="6 7">
    <location>
        <position position="21"/>
    </location>
    <ligand>
        <name>substrate</name>
    </ligand>
</feature>
<feature type="binding site" evidence="6 7">
    <location>
        <position position="53"/>
    </location>
    <ligand>
        <name>substrate</name>
    </ligand>
</feature>
<feature type="binding site" evidence="6 7">
    <location>
        <begin position="72"/>
        <end position="73"/>
    </location>
    <ligand>
        <name>substrate</name>
    </ligand>
</feature>
<feature type="sequence conflict" description="In Ref. 1; L12966." evidence="5" ref="1">
    <original>EL</original>
    <variation>DV</variation>
    <location>
        <begin position="81"/>
        <end position="82"/>
    </location>
</feature>
<feature type="sequence conflict" description="In Ref. 1; L12966." evidence="5" ref="1">
    <original>GAVARAANVGVIIERGNNLKENN</original>
    <variation>ASGAGGECWRNH</variation>
    <location>
        <begin position="100"/>
        <end position="122"/>
    </location>
</feature>
<feature type="strand" evidence="8">
    <location>
        <begin position="2"/>
        <end position="15"/>
    </location>
</feature>
<feature type="helix" evidence="8">
    <location>
        <begin position="19"/>
        <end position="23"/>
    </location>
</feature>
<feature type="strand" evidence="8">
    <location>
        <begin position="26"/>
        <end position="36"/>
    </location>
</feature>
<feature type="helix" evidence="8">
    <location>
        <begin position="39"/>
        <end position="44"/>
    </location>
</feature>
<feature type="helix" evidence="8">
    <location>
        <begin position="47"/>
        <end position="49"/>
    </location>
</feature>
<feature type="helix" evidence="8">
    <location>
        <begin position="53"/>
        <end position="64"/>
    </location>
</feature>
<feature type="strand" evidence="8">
    <location>
        <begin position="68"/>
        <end position="70"/>
    </location>
</feature>
<feature type="helix" evidence="8">
    <location>
        <begin position="72"/>
        <end position="86"/>
    </location>
</feature>
<feature type="strand" evidence="8">
    <location>
        <begin position="92"/>
        <end position="97"/>
    </location>
</feature>
<feature type="strand" evidence="8">
    <location>
        <begin position="109"/>
        <end position="114"/>
    </location>
</feature>
<name>FOLB_ECOLI</name>
<proteinExistence type="evidence at protein level"/>
<sequence>MDIVFIEQLSVITTIGVYDWEQTIEQKLVFDIEMAWDNRKAAKSDDVADCLSYADIAETVVSHVEGARFALVERVAEEVAELLLARFNSPWVRIKLSKPGAVARAANVGVIIERGNNLKENN</sequence>
<reference key="1">
    <citation type="journal article" date="1993" name="J. Bacteriol.">
        <title>Amplification of the bacA gene confers bacitracin resistance to Escherichia coli.</title>
        <authorList>
            <person name="Cain B.D."/>
            <person name="Norton P.J."/>
            <person name="Eubanks W."/>
            <person name="Nick H.S."/>
            <person name="Allen C.M."/>
        </authorList>
    </citation>
    <scope>NUCLEOTIDE SEQUENCE [GENOMIC DNA]</scope>
    <source>
        <strain>K12 / ATCC 35607 / JM83</strain>
    </source>
</reference>
<reference key="2">
    <citation type="journal article" date="1997" name="Science">
        <title>The complete genome sequence of Escherichia coli K-12.</title>
        <authorList>
            <person name="Blattner F.R."/>
            <person name="Plunkett G. III"/>
            <person name="Bloch C.A."/>
            <person name="Perna N.T."/>
            <person name="Burland V."/>
            <person name="Riley M."/>
            <person name="Collado-Vides J."/>
            <person name="Glasner J.D."/>
            <person name="Rode C.K."/>
            <person name="Mayhew G.F."/>
            <person name="Gregor J."/>
            <person name="Davis N.W."/>
            <person name="Kirkpatrick H.A."/>
            <person name="Goeden M.A."/>
            <person name="Rose D.J."/>
            <person name="Mau B."/>
            <person name="Shao Y."/>
        </authorList>
    </citation>
    <scope>NUCLEOTIDE SEQUENCE [LARGE SCALE GENOMIC DNA]</scope>
    <source>
        <strain>K12 / MG1655 / ATCC 47076</strain>
    </source>
</reference>
<reference key="3">
    <citation type="journal article" date="2006" name="Mol. Syst. Biol.">
        <title>Highly accurate genome sequences of Escherichia coli K-12 strains MG1655 and W3110.</title>
        <authorList>
            <person name="Hayashi K."/>
            <person name="Morooka N."/>
            <person name="Yamamoto Y."/>
            <person name="Fujita K."/>
            <person name="Isono K."/>
            <person name="Choi S."/>
            <person name="Ohtsubo E."/>
            <person name="Baba T."/>
            <person name="Wanner B.L."/>
            <person name="Mori H."/>
            <person name="Horiuchi T."/>
        </authorList>
    </citation>
    <scope>NUCLEOTIDE SEQUENCE [LARGE SCALE GENOMIC DNA]</scope>
    <source>
        <strain>K12 / W3110 / ATCC 27325 / DSM 5911</strain>
    </source>
</reference>
<reference key="4">
    <citation type="journal article" date="1998" name="J. Biol. Chem.">
        <title>Biosynthesis of pteridines in Escherichia coli. Structural and mechanistic similarity of dihydroneopterin-triphosphate epimerase and dihydroneopterin aldolase.</title>
        <authorList>
            <person name="Haussmann C."/>
            <person name="Rohdich F."/>
            <person name="Schmidt E."/>
            <person name="Bacher A."/>
            <person name="Richter G."/>
        </authorList>
    </citation>
    <scope>FUNCTION</scope>
    <scope>CATALYTIC ACTIVITY</scope>
    <scope>SUBUNIT</scope>
    <scope>BIOPHYSICOCHEMICAL PROPERTIES</scope>
    <scope>REACTION MECHANISM</scope>
</reference>
<reference key="5">
    <citation type="journal article" date="2014" name="Cell Biosci.">
        <title>Crystallographic and molecular dynamics simulation analysis of Escherichia coli dihydroneopterin aldolase.</title>
        <authorList>
            <person name="Blaszczyk J."/>
            <person name="Lu Z."/>
            <person name="Li Y."/>
            <person name="Yan H."/>
            <person name="Ji X."/>
        </authorList>
    </citation>
    <scope>X-RAY CRYSTALLOGRAPHY (1.07 ANGSTROMS) IN COMPLEX WITH L-NEOPTERIN</scope>
    <scope>REACTION MECHANISM</scope>
</reference>